<dbReference type="EMBL" id="CP000608">
    <property type="protein sequence ID" value="ABO46808.1"/>
    <property type="molecule type" value="Genomic_DNA"/>
</dbReference>
<dbReference type="RefSeq" id="WP_003015897.1">
    <property type="nucleotide sequence ID" value="NC_009257.1"/>
</dbReference>
<dbReference type="SMR" id="A4IY07"/>
<dbReference type="KEGG" id="ftw:FTW_0972"/>
<dbReference type="HOGENOM" id="CLU_113441_6_1_6"/>
<dbReference type="GO" id="GO:0022627">
    <property type="term" value="C:cytosolic small ribosomal subunit"/>
    <property type="evidence" value="ECO:0007669"/>
    <property type="project" value="TreeGrafter"/>
</dbReference>
<dbReference type="GO" id="GO:0070181">
    <property type="term" value="F:small ribosomal subunit rRNA binding"/>
    <property type="evidence" value="ECO:0007669"/>
    <property type="project" value="TreeGrafter"/>
</dbReference>
<dbReference type="GO" id="GO:0003735">
    <property type="term" value="F:structural constituent of ribosome"/>
    <property type="evidence" value="ECO:0007669"/>
    <property type="project" value="InterPro"/>
</dbReference>
<dbReference type="GO" id="GO:0006412">
    <property type="term" value="P:translation"/>
    <property type="evidence" value="ECO:0007669"/>
    <property type="project" value="UniProtKB-UniRule"/>
</dbReference>
<dbReference type="CDD" id="cd00473">
    <property type="entry name" value="bS6"/>
    <property type="match status" value="1"/>
</dbReference>
<dbReference type="Gene3D" id="3.30.70.60">
    <property type="match status" value="1"/>
</dbReference>
<dbReference type="HAMAP" id="MF_00360">
    <property type="entry name" value="Ribosomal_bS6"/>
    <property type="match status" value="1"/>
</dbReference>
<dbReference type="InterPro" id="IPR000529">
    <property type="entry name" value="Ribosomal_bS6"/>
</dbReference>
<dbReference type="InterPro" id="IPR035980">
    <property type="entry name" value="Ribosomal_bS6_sf"/>
</dbReference>
<dbReference type="InterPro" id="IPR020814">
    <property type="entry name" value="Ribosomal_S6_plastid/chlpt"/>
</dbReference>
<dbReference type="InterPro" id="IPR014717">
    <property type="entry name" value="Transl_elong_EF1B/ribsomal_bS6"/>
</dbReference>
<dbReference type="NCBIfam" id="TIGR00166">
    <property type="entry name" value="S6"/>
    <property type="match status" value="1"/>
</dbReference>
<dbReference type="PANTHER" id="PTHR21011">
    <property type="entry name" value="MITOCHONDRIAL 28S RIBOSOMAL PROTEIN S6"/>
    <property type="match status" value="1"/>
</dbReference>
<dbReference type="PANTHER" id="PTHR21011:SF1">
    <property type="entry name" value="SMALL RIBOSOMAL SUBUNIT PROTEIN BS6M"/>
    <property type="match status" value="1"/>
</dbReference>
<dbReference type="Pfam" id="PF01250">
    <property type="entry name" value="Ribosomal_S6"/>
    <property type="match status" value="1"/>
</dbReference>
<dbReference type="SUPFAM" id="SSF54995">
    <property type="entry name" value="Ribosomal protein S6"/>
    <property type="match status" value="1"/>
</dbReference>
<proteinExistence type="inferred from homology"/>
<organism>
    <name type="scientific">Francisella tularensis subsp. tularensis (strain WY96-3418)</name>
    <dbReference type="NCBI Taxonomy" id="418136"/>
    <lineage>
        <taxon>Bacteria</taxon>
        <taxon>Pseudomonadati</taxon>
        <taxon>Pseudomonadota</taxon>
        <taxon>Gammaproteobacteria</taxon>
        <taxon>Thiotrichales</taxon>
        <taxon>Francisellaceae</taxon>
        <taxon>Francisella</taxon>
    </lineage>
</organism>
<keyword id="KW-0687">Ribonucleoprotein</keyword>
<keyword id="KW-0689">Ribosomal protein</keyword>
<keyword id="KW-0694">RNA-binding</keyword>
<keyword id="KW-0699">rRNA-binding</keyword>
<feature type="chain" id="PRO_1000005266" description="Small ribosomal subunit protein bS6">
    <location>
        <begin position="1"/>
        <end position="111"/>
    </location>
</feature>
<sequence length="111" mass="13054">MKHYEVVLMIHPDQSDQLDAMLGKYRGIIEEKGGKIHRFEDWGRRQLAYPIEKLHKAHYVLFNIECPTESLEKLQESLRYNDAILRRLVIATKEAITEPSVMMESNEKEVI</sequence>
<comment type="function">
    <text evidence="1">Binds together with bS18 to 16S ribosomal RNA.</text>
</comment>
<comment type="similarity">
    <text evidence="1">Belongs to the bacterial ribosomal protein bS6 family.</text>
</comment>
<gene>
    <name evidence="1" type="primary">rpsF</name>
    <name type="ordered locus">FTW_0972</name>
</gene>
<name>RS6_FRATW</name>
<reference key="1">
    <citation type="journal article" date="2007" name="PLoS ONE">
        <title>Complete genomic characterization of a pathogenic A.II strain of Francisella tularensis subspecies tularensis.</title>
        <authorList>
            <person name="Beckstrom-Sternberg S.M."/>
            <person name="Auerbach R.K."/>
            <person name="Godbole S."/>
            <person name="Pearson J.V."/>
            <person name="Beckstrom-Sternberg J.S."/>
            <person name="Deng Z."/>
            <person name="Munk C."/>
            <person name="Kubota K."/>
            <person name="Zhou Y."/>
            <person name="Bruce D."/>
            <person name="Noronha J."/>
            <person name="Scheuermann R.H."/>
            <person name="Wang A."/>
            <person name="Wei X."/>
            <person name="Wang J."/>
            <person name="Hao J."/>
            <person name="Wagner D.M."/>
            <person name="Brettin T.S."/>
            <person name="Brown N."/>
            <person name="Gilna P."/>
            <person name="Keim P.S."/>
        </authorList>
    </citation>
    <scope>NUCLEOTIDE SEQUENCE [LARGE SCALE GENOMIC DNA]</scope>
    <source>
        <strain>WY96-3418</strain>
    </source>
</reference>
<protein>
    <recommendedName>
        <fullName evidence="1">Small ribosomal subunit protein bS6</fullName>
    </recommendedName>
    <alternativeName>
        <fullName evidence="2">30S ribosomal protein S6</fullName>
    </alternativeName>
</protein>
<accession>A4IY07</accession>
<evidence type="ECO:0000255" key="1">
    <source>
        <dbReference type="HAMAP-Rule" id="MF_00360"/>
    </source>
</evidence>
<evidence type="ECO:0000305" key="2"/>